<proteinExistence type="inferred from homology"/>
<keyword id="KW-0066">ATP synthesis</keyword>
<keyword id="KW-1003">Cell membrane</keyword>
<keyword id="KW-0139">CF(1)</keyword>
<keyword id="KW-0375">Hydrogen ion transport</keyword>
<keyword id="KW-0406">Ion transport</keyword>
<keyword id="KW-0472">Membrane</keyword>
<keyword id="KW-0813">Transport</keyword>
<dbReference type="EMBL" id="CP000246">
    <property type="protein sequence ID" value="ABG82898.1"/>
    <property type="molecule type" value="Genomic_DNA"/>
</dbReference>
<dbReference type="RefSeq" id="WP_003457416.1">
    <property type="nucleotide sequence ID" value="NC_008261.1"/>
</dbReference>
<dbReference type="SMR" id="Q0TNC1"/>
<dbReference type="STRING" id="195103.CPF_2455"/>
<dbReference type="PaxDb" id="195103-CPF_2455"/>
<dbReference type="KEGG" id="cpf:CPF_2455"/>
<dbReference type="eggNOG" id="COG0712">
    <property type="taxonomic scope" value="Bacteria"/>
</dbReference>
<dbReference type="HOGENOM" id="CLU_085114_4_0_9"/>
<dbReference type="Proteomes" id="UP000001823">
    <property type="component" value="Chromosome"/>
</dbReference>
<dbReference type="GO" id="GO:0005886">
    <property type="term" value="C:plasma membrane"/>
    <property type="evidence" value="ECO:0007669"/>
    <property type="project" value="UniProtKB-SubCell"/>
</dbReference>
<dbReference type="GO" id="GO:0045259">
    <property type="term" value="C:proton-transporting ATP synthase complex"/>
    <property type="evidence" value="ECO:0007669"/>
    <property type="project" value="UniProtKB-KW"/>
</dbReference>
<dbReference type="GO" id="GO:0046933">
    <property type="term" value="F:proton-transporting ATP synthase activity, rotational mechanism"/>
    <property type="evidence" value="ECO:0007669"/>
    <property type="project" value="UniProtKB-UniRule"/>
</dbReference>
<dbReference type="Gene3D" id="1.10.520.20">
    <property type="entry name" value="N-terminal domain of the delta subunit of the F1F0-ATP synthase"/>
    <property type="match status" value="1"/>
</dbReference>
<dbReference type="HAMAP" id="MF_01416">
    <property type="entry name" value="ATP_synth_delta_bact"/>
    <property type="match status" value="1"/>
</dbReference>
<dbReference type="InterPro" id="IPR026015">
    <property type="entry name" value="ATP_synth_OSCP/delta_N_sf"/>
</dbReference>
<dbReference type="InterPro" id="IPR020781">
    <property type="entry name" value="ATPase_OSCP/d_CS"/>
</dbReference>
<dbReference type="InterPro" id="IPR000711">
    <property type="entry name" value="ATPase_OSCP/dsu"/>
</dbReference>
<dbReference type="NCBIfam" id="TIGR01145">
    <property type="entry name" value="ATP_synt_delta"/>
    <property type="match status" value="1"/>
</dbReference>
<dbReference type="NCBIfam" id="NF004403">
    <property type="entry name" value="PRK05758.2-4"/>
    <property type="match status" value="1"/>
</dbReference>
<dbReference type="PANTHER" id="PTHR11910">
    <property type="entry name" value="ATP SYNTHASE DELTA CHAIN"/>
    <property type="match status" value="1"/>
</dbReference>
<dbReference type="Pfam" id="PF00213">
    <property type="entry name" value="OSCP"/>
    <property type="match status" value="1"/>
</dbReference>
<dbReference type="PRINTS" id="PR00125">
    <property type="entry name" value="ATPASEDELTA"/>
</dbReference>
<dbReference type="SUPFAM" id="SSF47928">
    <property type="entry name" value="N-terminal domain of the delta subunit of the F1F0-ATP synthase"/>
    <property type="match status" value="1"/>
</dbReference>
<dbReference type="PROSITE" id="PS00389">
    <property type="entry name" value="ATPASE_DELTA"/>
    <property type="match status" value="1"/>
</dbReference>
<feature type="chain" id="PRO_0000370951" description="ATP synthase subunit delta">
    <location>
        <begin position="1"/>
        <end position="179"/>
    </location>
</feature>
<sequence length="179" mass="21274">MYEYLDRRYALALYEVAEEKNKVEEYLNDLREICDIIYGNNELYEIIKHPQISTVRKKKTFRNIFEGKIDDELLSFLMVLIEKDRILYLREKLKEMEKIHLERNNTLLAEVKSVVPLTEDEVTRLVAKLENKYSKKILLKQEIDKSIIGGLYVRVGDDVIDGTVKSRLDDMKQIMLKRE</sequence>
<protein>
    <recommendedName>
        <fullName evidence="1">ATP synthase subunit delta</fullName>
    </recommendedName>
    <alternativeName>
        <fullName evidence="1">ATP synthase F(1) sector subunit delta</fullName>
    </alternativeName>
    <alternativeName>
        <fullName evidence="1">F-type ATPase subunit delta</fullName>
        <shortName evidence="1">F-ATPase subunit delta</shortName>
    </alternativeName>
</protein>
<name>ATPD_CLOP1</name>
<comment type="function">
    <text evidence="1">F(1)F(0) ATP synthase produces ATP from ADP in the presence of a proton or sodium gradient. F-type ATPases consist of two structural domains, F(1) containing the extramembraneous catalytic core and F(0) containing the membrane proton channel, linked together by a central stalk and a peripheral stalk. During catalysis, ATP synthesis in the catalytic domain of F(1) is coupled via a rotary mechanism of the central stalk subunits to proton translocation.</text>
</comment>
<comment type="function">
    <text evidence="1">This protein is part of the stalk that links CF(0) to CF(1). It either transmits conformational changes from CF(0) to CF(1) or is implicated in proton conduction.</text>
</comment>
<comment type="subunit">
    <text evidence="1">F-type ATPases have 2 components, F(1) - the catalytic core - and F(0) - the membrane proton channel. F(1) has five subunits: alpha(3), beta(3), gamma(1), delta(1), epsilon(1). F(0) has three main subunits: a(1), b(2) and c(10-14). The alpha and beta chains form an alternating ring which encloses part of the gamma chain. F(1) is attached to F(0) by a central stalk formed by the gamma and epsilon chains, while a peripheral stalk is formed by the delta and b chains.</text>
</comment>
<comment type="subcellular location">
    <subcellularLocation>
        <location evidence="1">Cell membrane</location>
        <topology evidence="1">Peripheral membrane protein</topology>
    </subcellularLocation>
</comment>
<comment type="similarity">
    <text evidence="1">Belongs to the ATPase delta chain family.</text>
</comment>
<gene>
    <name evidence="1" type="primary">atpH</name>
    <name type="ordered locus">CPF_2455</name>
</gene>
<accession>Q0TNC1</accession>
<evidence type="ECO:0000255" key="1">
    <source>
        <dbReference type="HAMAP-Rule" id="MF_01416"/>
    </source>
</evidence>
<organism>
    <name type="scientific">Clostridium perfringens (strain ATCC 13124 / DSM 756 / JCM 1290 / NCIMB 6125 / NCTC 8237 / Type A)</name>
    <dbReference type="NCBI Taxonomy" id="195103"/>
    <lineage>
        <taxon>Bacteria</taxon>
        <taxon>Bacillati</taxon>
        <taxon>Bacillota</taxon>
        <taxon>Clostridia</taxon>
        <taxon>Eubacteriales</taxon>
        <taxon>Clostridiaceae</taxon>
        <taxon>Clostridium</taxon>
    </lineage>
</organism>
<reference key="1">
    <citation type="journal article" date="2006" name="Genome Res.">
        <title>Skewed genomic variability in strains of the toxigenic bacterial pathogen, Clostridium perfringens.</title>
        <authorList>
            <person name="Myers G.S.A."/>
            <person name="Rasko D.A."/>
            <person name="Cheung J.K."/>
            <person name="Ravel J."/>
            <person name="Seshadri R."/>
            <person name="DeBoy R.T."/>
            <person name="Ren Q."/>
            <person name="Varga J."/>
            <person name="Awad M.M."/>
            <person name="Brinkac L.M."/>
            <person name="Daugherty S.C."/>
            <person name="Haft D.H."/>
            <person name="Dodson R.J."/>
            <person name="Madupu R."/>
            <person name="Nelson W.C."/>
            <person name="Rosovitz M.J."/>
            <person name="Sullivan S.A."/>
            <person name="Khouri H."/>
            <person name="Dimitrov G.I."/>
            <person name="Watkins K.L."/>
            <person name="Mulligan S."/>
            <person name="Benton J."/>
            <person name="Radune D."/>
            <person name="Fisher D.J."/>
            <person name="Atkins H.S."/>
            <person name="Hiscox T."/>
            <person name="Jost B.H."/>
            <person name="Billington S.J."/>
            <person name="Songer J.G."/>
            <person name="McClane B.A."/>
            <person name="Titball R.W."/>
            <person name="Rood J.I."/>
            <person name="Melville S.B."/>
            <person name="Paulsen I.T."/>
        </authorList>
    </citation>
    <scope>NUCLEOTIDE SEQUENCE [LARGE SCALE GENOMIC DNA]</scope>
    <source>
        <strain>ATCC 13124 / DSM 756 / JCM 1290 / NCIMB 6125 / NCTC 8237 / S 107 / Type A</strain>
    </source>
</reference>